<feature type="chain" id="PRO_0000418028" description="Probable flavonol synthase 6">
    <location>
        <begin position="1"/>
        <end position="293"/>
    </location>
</feature>
<feature type="domain" description="Fe2OG dioxygenase" evidence="2">
    <location>
        <begin position="156"/>
        <end position="253"/>
    </location>
</feature>
<feature type="binding site" evidence="1">
    <location>
        <begin position="164"/>
        <end position="166"/>
    </location>
    <ligand>
        <name>2-oxoglutarate</name>
        <dbReference type="ChEBI" id="CHEBI:16810"/>
    </ligand>
</feature>
<feature type="binding site" evidence="2">
    <location>
        <position position="178"/>
    </location>
    <ligand>
        <name>Fe cation</name>
        <dbReference type="ChEBI" id="CHEBI:24875"/>
        <note>catalytic</note>
    </ligand>
</feature>
<feature type="binding site" evidence="2">
    <location>
        <position position="180"/>
    </location>
    <ligand>
        <name>Fe cation</name>
        <dbReference type="ChEBI" id="CHEBI:24875"/>
        <note>catalytic</note>
    </ligand>
</feature>
<feature type="binding site" evidence="2">
    <location>
        <position position="234"/>
    </location>
    <ligand>
        <name>Fe cation</name>
        <dbReference type="ChEBI" id="CHEBI:24875"/>
        <note>catalytic</note>
    </ligand>
</feature>
<feature type="binding site" evidence="1">
    <location>
        <begin position="244"/>
        <end position="246"/>
    </location>
    <ligand>
        <name>2-oxoglutarate</name>
        <dbReference type="ChEBI" id="CHEBI:16810"/>
    </ligand>
</feature>
<sequence>MNVERDQHISPPCLLTKKIPIVDLSDPSDELVAHAVVKASEEWGIFQLVNHGIPAELMRRLQEVGRQFFELPASEKESVTRPADSQDIEGFFSKDPKKLKAWDDHLIHNIWPPSSINYRYWPNNPSDYSGDGFREVTKEYTRNVTNLTEKIVGGDKAQYVMRINYYPPSDSAIGAPAHTDFCGLALLVSNEVPGLQVFKDDHWFDVEYINSAVIVLIGDQIMRMSNGKYKNVLHRSIMDAKKTRMSWPILVEPKRGLVVGPLPELTGDENPPKFESLTFEDYVYRKIIKVLRD</sequence>
<evidence type="ECO:0000250" key="1"/>
<evidence type="ECO:0000255" key="2">
    <source>
        <dbReference type="PROSITE-ProRule" id="PRU00805"/>
    </source>
</evidence>
<evidence type="ECO:0000305" key="3"/>
<organism>
    <name type="scientific">Arabidopsis thaliana</name>
    <name type="common">Mouse-ear cress</name>
    <dbReference type="NCBI Taxonomy" id="3702"/>
    <lineage>
        <taxon>Eukaryota</taxon>
        <taxon>Viridiplantae</taxon>
        <taxon>Streptophyta</taxon>
        <taxon>Embryophyta</taxon>
        <taxon>Tracheophyta</taxon>
        <taxon>Spermatophyta</taxon>
        <taxon>Magnoliopsida</taxon>
        <taxon>eudicotyledons</taxon>
        <taxon>Gunneridae</taxon>
        <taxon>Pentapetalae</taxon>
        <taxon>rosids</taxon>
        <taxon>malvids</taxon>
        <taxon>Brassicales</taxon>
        <taxon>Brassicaceae</taxon>
        <taxon>Camelineae</taxon>
        <taxon>Arabidopsis</taxon>
    </lineage>
</organism>
<protein>
    <recommendedName>
        <fullName>Probable flavonol synthase 6</fullName>
        <ecNumber>1.14.20.6</ecNumber>
    </recommendedName>
</protein>
<name>FLS6_ARATH</name>
<accession>F4K7D5</accession>
<proteinExistence type="inferred from homology"/>
<keyword id="KW-0408">Iron</keyword>
<keyword id="KW-0479">Metal-binding</keyword>
<keyword id="KW-0560">Oxidoreductase</keyword>
<keyword id="KW-1185">Reference proteome</keyword>
<comment type="catalytic activity">
    <reaction>
        <text>a (2R,3R)-dihydroflavonol + 2-oxoglutarate + O2 = a flavonol + succinate + CO2 + H2O</text>
        <dbReference type="Rhea" id="RHEA:21088"/>
        <dbReference type="ChEBI" id="CHEBI:15377"/>
        <dbReference type="ChEBI" id="CHEBI:15379"/>
        <dbReference type="ChEBI" id="CHEBI:16526"/>
        <dbReference type="ChEBI" id="CHEBI:16810"/>
        <dbReference type="ChEBI" id="CHEBI:28802"/>
        <dbReference type="ChEBI" id="CHEBI:30031"/>
        <dbReference type="ChEBI" id="CHEBI:138188"/>
        <dbReference type="EC" id="1.14.20.6"/>
    </reaction>
</comment>
<comment type="cofactor">
    <cofactor evidence="2">
        <name>Fe(2+)</name>
        <dbReference type="ChEBI" id="CHEBI:29033"/>
    </cofactor>
    <text evidence="2">Binds 1 Fe(2+) ion per subunit.</text>
</comment>
<comment type="pathway">
    <text>Secondary metabolite biosynthesis; flavonoid biosynthesis.</text>
</comment>
<comment type="similarity">
    <text evidence="3">Belongs to the iron/ascorbate-dependent oxidoreductase family.</text>
</comment>
<gene>
    <name type="primary">FLS6</name>
    <name type="ordered locus">At5g43935</name>
    <name type="ORF">MRH10</name>
</gene>
<dbReference type="EC" id="1.14.20.6"/>
<dbReference type="EMBL" id="AB006703">
    <property type="status" value="NOT_ANNOTATED_CDS"/>
    <property type="molecule type" value="Genomic_DNA"/>
</dbReference>
<dbReference type="EMBL" id="CP002688">
    <property type="protein sequence ID" value="AED95033.1"/>
    <property type="molecule type" value="Genomic_DNA"/>
</dbReference>
<dbReference type="RefSeq" id="NP_680388.1">
    <property type="nucleotide sequence ID" value="NM_148083.1"/>
</dbReference>
<dbReference type="SMR" id="F4K7D5"/>
<dbReference type="FunCoup" id="F4K7D5">
    <property type="interactions" value="24"/>
</dbReference>
<dbReference type="STRING" id="3702.F4K7D5"/>
<dbReference type="PaxDb" id="3702-AT5G43935.1"/>
<dbReference type="EnsemblPlants" id="AT5G43935.1">
    <property type="protein sequence ID" value="AT5G43935.1"/>
    <property type="gene ID" value="AT5G43935"/>
</dbReference>
<dbReference type="GeneID" id="834416"/>
<dbReference type="Gramene" id="AT5G43935.1">
    <property type="protein sequence ID" value="AT5G43935.1"/>
    <property type="gene ID" value="AT5G43935"/>
</dbReference>
<dbReference type="KEGG" id="ath:AT5G43935"/>
<dbReference type="Araport" id="AT5G43935"/>
<dbReference type="TAIR" id="AT5G43935">
    <property type="gene designation" value="FLS6"/>
</dbReference>
<dbReference type="eggNOG" id="KOG0143">
    <property type="taxonomic scope" value="Eukaryota"/>
</dbReference>
<dbReference type="HOGENOM" id="CLU_010119_16_2_1"/>
<dbReference type="InParanoid" id="F4K7D5"/>
<dbReference type="OMA" id="WPTSSIN"/>
<dbReference type="PhylomeDB" id="F4K7D5"/>
<dbReference type="UniPathway" id="UPA00154"/>
<dbReference type="PRO" id="PR:F4K7D5"/>
<dbReference type="Proteomes" id="UP000006548">
    <property type="component" value="Chromosome 5"/>
</dbReference>
<dbReference type="ExpressionAtlas" id="F4K7D5">
    <property type="expression patterns" value="baseline"/>
</dbReference>
<dbReference type="GO" id="GO:0045431">
    <property type="term" value="F:flavonol synthase activity"/>
    <property type="evidence" value="ECO:0007669"/>
    <property type="project" value="UniProtKB-EC"/>
</dbReference>
<dbReference type="GO" id="GO:0046872">
    <property type="term" value="F:metal ion binding"/>
    <property type="evidence" value="ECO:0007669"/>
    <property type="project" value="UniProtKB-KW"/>
</dbReference>
<dbReference type="FunFam" id="2.60.120.330:FF:000070">
    <property type="entry name" value="2-oxoglutarate (2OG) and Fe(II)-dependent oxygenase superfamily protein"/>
    <property type="match status" value="1"/>
</dbReference>
<dbReference type="Gene3D" id="2.60.120.330">
    <property type="entry name" value="B-lactam Antibiotic, Isopenicillin N Synthase, Chain"/>
    <property type="match status" value="2"/>
</dbReference>
<dbReference type="InterPro" id="IPR026992">
    <property type="entry name" value="DIOX_N"/>
</dbReference>
<dbReference type="InterPro" id="IPR044861">
    <property type="entry name" value="IPNS-like_FE2OG_OXY"/>
</dbReference>
<dbReference type="InterPro" id="IPR027443">
    <property type="entry name" value="IPNS-like_sf"/>
</dbReference>
<dbReference type="InterPro" id="IPR050231">
    <property type="entry name" value="Iron_ascorbate_oxido_reductase"/>
</dbReference>
<dbReference type="InterPro" id="IPR005123">
    <property type="entry name" value="Oxoglu/Fe-dep_dioxygenase_dom"/>
</dbReference>
<dbReference type="PANTHER" id="PTHR47990">
    <property type="entry name" value="2-OXOGLUTARATE (2OG) AND FE(II)-DEPENDENT OXYGENASE SUPERFAMILY PROTEIN-RELATED"/>
    <property type="match status" value="1"/>
</dbReference>
<dbReference type="Pfam" id="PF03171">
    <property type="entry name" value="2OG-FeII_Oxy"/>
    <property type="match status" value="1"/>
</dbReference>
<dbReference type="Pfam" id="PF14226">
    <property type="entry name" value="DIOX_N"/>
    <property type="match status" value="1"/>
</dbReference>
<dbReference type="SUPFAM" id="SSF51197">
    <property type="entry name" value="Clavaminate synthase-like"/>
    <property type="match status" value="1"/>
</dbReference>
<dbReference type="PROSITE" id="PS51471">
    <property type="entry name" value="FE2OG_OXY"/>
    <property type="match status" value="1"/>
</dbReference>
<reference key="1">
    <citation type="journal article" date="1997" name="DNA Res.">
        <title>Structural analysis of Arabidopsis thaliana chromosome 5. II. Sequence features of the regions of 1,044,062 bp covered by thirteen physically assigned P1 clones.</title>
        <authorList>
            <person name="Kotani H."/>
            <person name="Nakamura Y."/>
            <person name="Sato S."/>
            <person name="Kaneko T."/>
            <person name="Asamizu E."/>
            <person name="Miyajima N."/>
            <person name="Tabata S."/>
        </authorList>
    </citation>
    <scope>NUCLEOTIDE SEQUENCE [LARGE SCALE GENOMIC DNA]</scope>
    <source>
        <strain>cv. Columbia</strain>
    </source>
</reference>
<reference key="2">
    <citation type="journal article" date="2017" name="Plant J.">
        <title>Araport11: a complete reannotation of the Arabidopsis thaliana reference genome.</title>
        <authorList>
            <person name="Cheng C.Y."/>
            <person name="Krishnakumar V."/>
            <person name="Chan A.P."/>
            <person name="Thibaud-Nissen F."/>
            <person name="Schobel S."/>
            <person name="Town C.D."/>
        </authorList>
    </citation>
    <scope>GENOME REANNOTATION</scope>
    <source>
        <strain>cv. Columbia</strain>
    </source>
</reference>
<reference key="3">
    <citation type="journal article" date="2008" name="Plant Physiol.">
        <title>Functional analysis of a predicted flavonol synthase gene family in Arabidopsis.</title>
        <authorList>
            <person name="Owens D.K."/>
            <person name="Alerding A.B."/>
            <person name="Crosby K.C."/>
            <person name="Bandara A.B."/>
            <person name="Westwood J.H."/>
            <person name="Winkel B.S."/>
        </authorList>
    </citation>
    <scope>GENE FAMILY</scope>
    <scope>NOMENCLATURE</scope>
</reference>